<sequence>MSMTPREIVHELNRHIIGQDDAKRAVAIALRNRWRRMQLPAELRQEVTPKNILMIGPTGVGKTEIARRLAKLANAPFLKVEATKFTEVGYVGRDVESIIRDLADAALKMLREQEVHKMRHRAEDAAEERILDALLPPARPVGFSEEPVQSGDSNTRQLFRKRLREGQLDDKEIDIEVAESPAGVEIMAPPGMEEMTNQLQNLFANMGKGKKKSRKLKIKEAFKLIRDEEAARLVNEEDLKARALEAVEQNGIVFIDEIDKVAKRGNTSGADVSREGVQRDLLPLIEGSTVNTKLGMVKTDHILFIASGAFHLSKPSDLVPELQGRLPIRVELKALSPQDFERILTEPHAALTEQYRELLKTEGLHIEFLEDGIKRIAEIAWQVNEKTENIGARRLHTLLERLLEEVSFSAADLAGKQQGEPIRIDAAYVNEHLGELAQDEDLSRYIL</sequence>
<proteinExistence type="inferred from homology"/>
<comment type="function">
    <text evidence="1">ATPase subunit of a proteasome-like degradation complex; this subunit has chaperone activity. The binding of ATP and its subsequent hydrolysis by HslU are essential for unfolding of protein substrates subsequently hydrolyzed by HslV. HslU recognizes the N-terminal part of its protein substrates and unfolds these before they are guided to HslV for hydrolysis.</text>
</comment>
<comment type="subunit">
    <text evidence="1">A double ring-shaped homohexamer of HslV is capped on each side by a ring-shaped HslU homohexamer. The assembly of the HslU/HslV complex is dependent on binding of ATP.</text>
</comment>
<comment type="subcellular location">
    <subcellularLocation>
        <location evidence="1">Cytoplasm</location>
    </subcellularLocation>
</comment>
<comment type="similarity">
    <text evidence="1">Belongs to the ClpX chaperone family. HslU subfamily.</text>
</comment>
<name>HSLU_STUS1</name>
<keyword id="KW-0067">ATP-binding</keyword>
<keyword id="KW-0143">Chaperone</keyword>
<keyword id="KW-0963">Cytoplasm</keyword>
<keyword id="KW-0547">Nucleotide-binding</keyword>
<keyword id="KW-1185">Reference proteome</keyword>
<keyword id="KW-0346">Stress response</keyword>
<organism>
    <name type="scientific">Stutzerimonas stutzeri (strain A1501)</name>
    <name type="common">Pseudomonas stutzeri</name>
    <dbReference type="NCBI Taxonomy" id="379731"/>
    <lineage>
        <taxon>Bacteria</taxon>
        <taxon>Pseudomonadati</taxon>
        <taxon>Pseudomonadota</taxon>
        <taxon>Gammaproteobacteria</taxon>
        <taxon>Pseudomonadales</taxon>
        <taxon>Pseudomonadaceae</taxon>
        <taxon>Stutzerimonas</taxon>
    </lineage>
</organism>
<gene>
    <name evidence="1" type="primary">hslU</name>
    <name type="ordered locus">PST_0344</name>
</gene>
<evidence type="ECO:0000255" key="1">
    <source>
        <dbReference type="HAMAP-Rule" id="MF_00249"/>
    </source>
</evidence>
<feature type="chain" id="PRO_1000012780" description="ATP-dependent protease ATPase subunit HslU">
    <location>
        <begin position="1"/>
        <end position="447"/>
    </location>
</feature>
<feature type="binding site" evidence="1">
    <location>
        <position position="17"/>
    </location>
    <ligand>
        <name>ATP</name>
        <dbReference type="ChEBI" id="CHEBI:30616"/>
    </ligand>
</feature>
<feature type="binding site" evidence="1">
    <location>
        <begin position="59"/>
        <end position="64"/>
    </location>
    <ligand>
        <name>ATP</name>
        <dbReference type="ChEBI" id="CHEBI:30616"/>
    </ligand>
</feature>
<feature type="binding site" evidence="1">
    <location>
        <position position="256"/>
    </location>
    <ligand>
        <name>ATP</name>
        <dbReference type="ChEBI" id="CHEBI:30616"/>
    </ligand>
</feature>
<feature type="binding site" evidence="1">
    <location>
        <position position="321"/>
    </location>
    <ligand>
        <name>ATP</name>
        <dbReference type="ChEBI" id="CHEBI:30616"/>
    </ligand>
</feature>
<feature type="binding site" evidence="1">
    <location>
        <position position="393"/>
    </location>
    <ligand>
        <name>ATP</name>
        <dbReference type="ChEBI" id="CHEBI:30616"/>
    </ligand>
</feature>
<reference key="1">
    <citation type="journal article" date="2008" name="Proc. Natl. Acad. Sci. U.S.A.">
        <title>Nitrogen fixation island and rhizosphere competence traits in the genome of root-associated Pseudomonas stutzeri A1501.</title>
        <authorList>
            <person name="Yan Y."/>
            <person name="Yang J."/>
            <person name="Dou Y."/>
            <person name="Chen M."/>
            <person name="Ping S."/>
            <person name="Peng J."/>
            <person name="Lu W."/>
            <person name="Zhang W."/>
            <person name="Yao Z."/>
            <person name="Li H."/>
            <person name="Liu W."/>
            <person name="He S."/>
            <person name="Geng L."/>
            <person name="Zhang X."/>
            <person name="Yang F."/>
            <person name="Yu H."/>
            <person name="Zhan Y."/>
            <person name="Li D."/>
            <person name="Lin Z."/>
            <person name="Wang Y."/>
            <person name="Elmerich C."/>
            <person name="Lin M."/>
            <person name="Jin Q."/>
        </authorList>
    </citation>
    <scope>NUCLEOTIDE SEQUENCE [LARGE SCALE GENOMIC DNA]</scope>
    <source>
        <strain>A1501</strain>
    </source>
</reference>
<protein>
    <recommendedName>
        <fullName evidence="1">ATP-dependent protease ATPase subunit HslU</fullName>
    </recommendedName>
    <alternativeName>
        <fullName evidence="1">Unfoldase HslU</fullName>
    </alternativeName>
</protein>
<dbReference type="EMBL" id="CP000304">
    <property type="protein sequence ID" value="ABP78050.1"/>
    <property type="molecule type" value="Genomic_DNA"/>
</dbReference>
<dbReference type="RefSeq" id="WP_011911582.1">
    <property type="nucleotide sequence ID" value="NC_009434.1"/>
</dbReference>
<dbReference type="SMR" id="A4VGE9"/>
<dbReference type="GeneID" id="66819589"/>
<dbReference type="KEGG" id="psa:PST_0344"/>
<dbReference type="eggNOG" id="COG1220">
    <property type="taxonomic scope" value="Bacteria"/>
</dbReference>
<dbReference type="HOGENOM" id="CLU_033123_0_0_6"/>
<dbReference type="Proteomes" id="UP000000233">
    <property type="component" value="Chromosome"/>
</dbReference>
<dbReference type="GO" id="GO:0009376">
    <property type="term" value="C:HslUV protease complex"/>
    <property type="evidence" value="ECO:0007669"/>
    <property type="project" value="UniProtKB-UniRule"/>
</dbReference>
<dbReference type="GO" id="GO:0005524">
    <property type="term" value="F:ATP binding"/>
    <property type="evidence" value="ECO:0007669"/>
    <property type="project" value="UniProtKB-UniRule"/>
</dbReference>
<dbReference type="GO" id="GO:0016887">
    <property type="term" value="F:ATP hydrolysis activity"/>
    <property type="evidence" value="ECO:0007669"/>
    <property type="project" value="InterPro"/>
</dbReference>
<dbReference type="GO" id="GO:0008233">
    <property type="term" value="F:peptidase activity"/>
    <property type="evidence" value="ECO:0007669"/>
    <property type="project" value="InterPro"/>
</dbReference>
<dbReference type="GO" id="GO:0036402">
    <property type="term" value="F:proteasome-activating activity"/>
    <property type="evidence" value="ECO:0007669"/>
    <property type="project" value="UniProtKB-UniRule"/>
</dbReference>
<dbReference type="GO" id="GO:0043335">
    <property type="term" value="P:protein unfolding"/>
    <property type="evidence" value="ECO:0007669"/>
    <property type="project" value="UniProtKB-UniRule"/>
</dbReference>
<dbReference type="GO" id="GO:0051603">
    <property type="term" value="P:proteolysis involved in protein catabolic process"/>
    <property type="evidence" value="ECO:0007669"/>
    <property type="project" value="TreeGrafter"/>
</dbReference>
<dbReference type="CDD" id="cd19498">
    <property type="entry name" value="RecA-like_HslU"/>
    <property type="match status" value="1"/>
</dbReference>
<dbReference type="FunFam" id="1.10.8.10:FF:000028">
    <property type="entry name" value="ATP-dependent protease ATPase subunit HslU"/>
    <property type="match status" value="1"/>
</dbReference>
<dbReference type="FunFam" id="3.40.50.300:FF:000213">
    <property type="entry name" value="ATP-dependent protease ATPase subunit HslU"/>
    <property type="match status" value="1"/>
</dbReference>
<dbReference type="FunFam" id="3.40.50.300:FF:000220">
    <property type="entry name" value="ATP-dependent protease ATPase subunit HslU"/>
    <property type="match status" value="1"/>
</dbReference>
<dbReference type="Gene3D" id="1.10.8.60">
    <property type="match status" value="1"/>
</dbReference>
<dbReference type="Gene3D" id="3.40.50.300">
    <property type="entry name" value="P-loop containing nucleotide triphosphate hydrolases"/>
    <property type="match status" value="2"/>
</dbReference>
<dbReference type="HAMAP" id="MF_00249">
    <property type="entry name" value="HslU"/>
    <property type="match status" value="1"/>
</dbReference>
<dbReference type="InterPro" id="IPR003593">
    <property type="entry name" value="AAA+_ATPase"/>
</dbReference>
<dbReference type="InterPro" id="IPR050052">
    <property type="entry name" value="ATP-dep_Clp_protease_ClpX"/>
</dbReference>
<dbReference type="InterPro" id="IPR003959">
    <property type="entry name" value="ATPase_AAA_core"/>
</dbReference>
<dbReference type="InterPro" id="IPR019489">
    <property type="entry name" value="Clp_ATPase_C"/>
</dbReference>
<dbReference type="InterPro" id="IPR004491">
    <property type="entry name" value="HslU"/>
</dbReference>
<dbReference type="InterPro" id="IPR027417">
    <property type="entry name" value="P-loop_NTPase"/>
</dbReference>
<dbReference type="NCBIfam" id="TIGR00390">
    <property type="entry name" value="hslU"/>
    <property type="match status" value="1"/>
</dbReference>
<dbReference type="NCBIfam" id="NF003544">
    <property type="entry name" value="PRK05201.1"/>
    <property type="match status" value="1"/>
</dbReference>
<dbReference type="PANTHER" id="PTHR48102">
    <property type="entry name" value="ATP-DEPENDENT CLP PROTEASE ATP-BINDING SUBUNIT CLPX-LIKE, MITOCHONDRIAL-RELATED"/>
    <property type="match status" value="1"/>
</dbReference>
<dbReference type="PANTHER" id="PTHR48102:SF3">
    <property type="entry name" value="ATP-DEPENDENT PROTEASE ATPASE SUBUNIT HSLU"/>
    <property type="match status" value="1"/>
</dbReference>
<dbReference type="Pfam" id="PF00004">
    <property type="entry name" value="AAA"/>
    <property type="match status" value="1"/>
</dbReference>
<dbReference type="Pfam" id="PF07724">
    <property type="entry name" value="AAA_2"/>
    <property type="match status" value="1"/>
</dbReference>
<dbReference type="SMART" id="SM00382">
    <property type="entry name" value="AAA"/>
    <property type="match status" value="1"/>
</dbReference>
<dbReference type="SMART" id="SM01086">
    <property type="entry name" value="ClpB_D2-small"/>
    <property type="match status" value="1"/>
</dbReference>
<dbReference type="SUPFAM" id="SSF52540">
    <property type="entry name" value="P-loop containing nucleoside triphosphate hydrolases"/>
    <property type="match status" value="1"/>
</dbReference>
<accession>A4VGE9</accession>